<gene>
    <name evidence="1" type="primary">hisS</name>
    <name type="ordered locus">EcE24377A_2798</name>
</gene>
<comment type="catalytic activity">
    <reaction evidence="1">
        <text>tRNA(His) + L-histidine + ATP = L-histidyl-tRNA(His) + AMP + diphosphate + H(+)</text>
        <dbReference type="Rhea" id="RHEA:17313"/>
        <dbReference type="Rhea" id="RHEA-COMP:9665"/>
        <dbReference type="Rhea" id="RHEA-COMP:9689"/>
        <dbReference type="ChEBI" id="CHEBI:15378"/>
        <dbReference type="ChEBI" id="CHEBI:30616"/>
        <dbReference type="ChEBI" id="CHEBI:33019"/>
        <dbReference type="ChEBI" id="CHEBI:57595"/>
        <dbReference type="ChEBI" id="CHEBI:78442"/>
        <dbReference type="ChEBI" id="CHEBI:78527"/>
        <dbReference type="ChEBI" id="CHEBI:456215"/>
        <dbReference type="EC" id="6.1.1.21"/>
    </reaction>
</comment>
<comment type="subunit">
    <text evidence="1">Homodimer.</text>
</comment>
<comment type="subcellular location">
    <subcellularLocation>
        <location evidence="1">Cytoplasm</location>
    </subcellularLocation>
</comment>
<comment type="similarity">
    <text evidence="1">Belongs to the class-II aminoacyl-tRNA synthetase family.</text>
</comment>
<reference key="1">
    <citation type="journal article" date="2008" name="J. Bacteriol.">
        <title>The pangenome structure of Escherichia coli: comparative genomic analysis of E. coli commensal and pathogenic isolates.</title>
        <authorList>
            <person name="Rasko D.A."/>
            <person name="Rosovitz M.J."/>
            <person name="Myers G.S.A."/>
            <person name="Mongodin E.F."/>
            <person name="Fricke W.F."/>
            <person name="Gajer P."/>
            <person name="Crabtree J."/>
            <person name="Sebaihia M."/>
            <person name="Thomson N.R."/>
            <person name="Chaudhuri R."/>
            <person name="Henderson I.R."/>
            <person name="Sperandio V."/>
            <person name="Ravel J."/>
        </authorList>
    </citation>
    <scope>NUCLEOTIDE SEQUENCE [LARGE SCALE GENOMIC DNA]</scope>
    <source>
        <strain>E24377A / ETEC</strain>
    </source>
</reference>
<name>SYH_ECO24</name>
<protein>
    <recommendedName>
        <fullName evidence="1">Histidine--tRNA ligase</fullName>
        <ecNumber evidence="1">6.1.1.21</ecNumber>
    </recommendedName>
    <alternativeName>
        <fullName evidence="1">Histidyl-tRNA synthetase</fullName>
        <shortName evidence="1">HisRS</shortName>
    </alternativeName>
</protein>
<organism>
    <name type="scientific">Escherichia coli O139:H28 (strain E24377A / ETEC)</name>
    <dbReference type="NCBI Taxonomy" id="331111"/>
    <lineage>
        <taxon>Bacteria</taxon>
        <taxon>Pseudomonadati</taxon>
        <taxon>Pseudomonadota</taxon>
        <taxon>Gammaproteobacteria</taxon>
        <taxon>Enterobacterales</taxon>
        <taxon>Enterobacteriaceae</taxon>
        <taxon>Escherichia</taxon>
    </lineage>
</organism>
<feature type="chain" id="PRO_1000057826" description="Histidine--tRNA ligase">
    <location>
        <begin position="1"/>
        <end position="424"/>
    </location>
</feature>
<evidence type="ECO:0000255" key="1">
    <source>
        <dbReference type="HAMAP-Rule" id="MF_00127"/>
    </source>
</evidence>
<proteinExistence type="inferred from homology"/>
<dbReference type="EC" id="6.1.1.21" evidence="1"/>
<dbReference type="EMBL" id="CP000800">
    <property type="protein sequence ID" value="ABV16940.1"/>
    <property type="molecule type" value="Genomic_DNA"/>
</dbReference>
<dbReference type="RefSeq" id="WP_001107167.1">
    <property type="nucleotide sequence ID" value="NC_009801.1"/>
</dbReference>
<dbReference type="SMR" id="A7ZPV7"/>
<dbReference type="GeneID" id="75206207"/>
<dbReference type="KEGG" id="ecw:EcE24377A_2798"/>
<dbReference type="HOGENOM" id="CLU_025113_1_1_6"/>
<dbReference type="Proteomes" id="UP000001122">
    <property type="component" value="Chromosome"/>
</dbReference>
<dbReference type="GO" id="GO:0005737">
    <property type="term" value="C:cytoplasm"/>
    <property type="evidence" value="ECO:0007669"/>
    <property type="project" value="UniProtKB-SubCell"/>
</dbReference>
<dbReference type="GO" id="GO:0005524">
    <property type="term" value="F:ATP binding"/>
    <property type="evidence" value="ECO:0007669"/>
    <property type="project" value="UniProtKB-UniRule"/>
</dbReference>
<dbReference type="GO" id="GO:0004821">
    <property type="term" value="F:histidine-tRNA ligase activity"/>
    <property type="evidence" value="ECO:0007669"/>
    <property type="project" value="UniProtKB-UniRule"/>
</dbReference>
<dbReference type="GO" id="GO:0006427">
    <property type="term" value="P:histidyl-tRNA aminoacylation"/>
    <property type="evidence" value="ECO:0007669"/>
    <property type="project" value="UniProtKB-UniRule"/>
</dbReference>
<dbReference type="CDD" id="cd00773">
    <property type="entry name" value="HisRS-like_core"/>
    <property type="match status" value="1"/>
</dbReference>
<dbReference type="CDD" id="cd00859">
    <property type="entry name" value="HisRS_anticodon"/>
    <property type="match status" value="1"/>
</dbReference>
<dbReference type="FunFam" id="3.30.930.10:FF:000005">
    <property type="entry name" value="Histidine--tRNA ligase"/>
    <property type="match status" value="1"/>
</dbReference>
<dbReference type="FunFam" id="3.40.50.800:FF:000007">
    <property type="entry name" value="Histidine--tRNA ligase"/>
    <property type="match status" value="1"/>
</dbReference>
<dbReference type="Gene3D" id="3.40.50.800">
    <property type="entry name" value="Anticodon-binding domain"/>
    <property type="match status" value="1"/>
</dbReference>
<dbReference type="Gene3D" id="3.30.930.10">
    <property type="entry name" value="Bira Bifunctional Protein, Domain 2"/>
    <property type="match status" value="1"/>
</dbReference>
<dbReference type="HAMAP" id="MF_00127">
    <property type="entry name" value="His_tRNA_synth"/>
    <property type="match status" value="1"/>
</dbReference>
<dbReference type="InterPro" id="IPR006195">
    <property type="entry name" value="aa-tRNA-synth_II"/>
</dbReference>
<dbReference type="InterPro" id="IPR045864">
    <property type="entry name" value="aa-tRNA-synth_II/BPL/LPL"/>
</dbReference>
<dbReference type="InterPro" id="IPR004154">
    <property type="entry name" value="Anticodon-bd"/>
</dbReference>
<dbReference type="InterPro" id="IPR036621">
    <property type="entry name" value="Anticodon-bd_dom_sf"/>
</dbReference>
<dbReference type="InterPro" id="IPR015807">
    <property type="entry name" value="His-tRNA-ligase"/>
</dbReference>
<dbReference type="InterPro" id="IPR041715">
    <property type="entry name" value="HisRS-like_core"/>
</dbReference>
<dbReference type="InterPro" id="IPR004516">
    <property type="entry name" value="HisRS/HisZ"/>
</dbReference>
<dbReference type="InterPro" id="IPR033656">
    <property type="entry name" value="HisRS_anticodon"/>
</dbReference>
<dbReference type="NCBIfam" id="TIGR00442">
    <property type="entry name" value="hisS"/>
    <property type="match status" value="1"/>
</dbReference>
<dbReference type="PANTHER" id="PTHR43707:SF1">
    <property type="entry name" value="HISTIDINE--TRNA LIGASE, MITOCHONDRIAL-RELATED"/>
    <property type="match status" value="1"/>
</dbReference>
<dbReference type="PANTHER" id="PTHR43707">
    <property type="entry name" value="HISTIDYL-TRNA SYNTHETASE"/>
    <property type="match status" value="1"/>
</dbReference>
<dbReference type="Pfam" id="PF03129">
    <property type="entry name" value="HGTP_anticodon"/>
    <property type="match status" value="1"/>
</dbReference>
<dbReference type="Pfam" id="PF13393">
    <property type="entry name" value="tRNA-synt_His"/>
    <property type="match status" value="1"/>
</dbReference>
<dbReference type="PIRSF" id="PIRSF001549">
    <property type="entry name" value="His-tRNA_synth"/>
    <property type="match status" value="1"/>
</dbReference>
<dbReference type="SUPFAM" id="SSF52954">
    <property type="entry name" value="Class II aaRS ABD-related"/>
    <property type="match status" value="1"/>
</dbReference>
<dbReference type="SUPFAM" id="SSF55681">
    <property type="entry name" value="Class II aaRS and biotin synthetases"/>
    <property type="match status" value="1"/>
</dbReference>
<dbReference type="PROSITE" id="PS50862">
    <property type="entry name" value="AA_TRNA_LIGASE_II"/>
    <property type="match status" value="1"/>
</dbReference>
<accession>A7ZPV7</accession>
<sequence>MAKNIQAIRGMNDYLPGETAIWQRIEGTLKNVLGSYGYSEIRLPIVEQTPLFKRAIGEVTDVVEKEMYTFEDRNGDSLTLRPEGTAGCVRAGIEHGLLYNQEQRLWYIGPMFRHERPQKGRYRQFHQLGCEVFGLQGPDIDAELIMLTARWWRALGISEHVTLELNSIGSLEARANYRDALVAFLEQHKEKLDEDCKRRMYTNPLRVLDSKNPEVQALLNDAPALGDYLDEESREHFAGLCKLLESAGIAYTVNQRLVRGLDYYNRTVFEWVTNSLGSQGTVCAGGRYDGLVEQLGGRATPAVGFAMGLERLVLLVQAVNPEFKADPVVDIYLVASGADTQSAAMALAERLRDELPGVKLMTNHGGGNFKKQFARADKWGARVAVVLGESEVANGTAVVKDLRSGEQTAVAQDSVAAHLRTLLG</sequence>
<keyword id="KW-0030">Aminoacyl-tRNA synthetase</keyword>
<keyword id="KW-0067">ATP-binding</keyword>
<keyword id="KW-0963">Cytoplasm</keyword>
<keyword id="KW-0436">Ligase</keyword>
<keyword id="KW-0547">Nucleotide-binding</keyword>
<keyword id="KW-0648">Protein biosynthesis</keyword>
<keyword id="KW-1185">Reference proteome</keyword>